<evidence type="ECO:0000250" key="1">
    <source>
        <dbReference type="UniProtKB" id="O94502"/>
    </source>
</evidence>
<evidence type="ECO:0000255" key="2"/>
<evidence type="ECO:0000269" key="3">
    <source>
    </source>
</evidence>
<evidence type="ECO:0000269" key="4">
    <source>
    </source>
</evidence>
<evidence type="ECO:0000269" key="5">
    <source>
    </source>
</evidence>
<evidence type="ECO:0000303" key="6">
    <source>
    </source>
</evidence>
<evidence type="ECO:0000303" key="7">
    <source>
    </source>
</evidence>
<evidence type="ECO:0000305" key="8"/>
<evidence type="ECO:0000312" key="9">
    <source>
        <dbReference type="EMBL" id="AAI15590.1"/>
    </source>
</evidence>
<evidence type="ECO:0000312" key="10">
    <source>
        <dbReference type="EMBL" id="BAC36618.1"/>
    </source>
</evidence>
<evidence type="ECO:0000312" key="11">
    <source>
        <dbReference type="MGI" id="MGI:2144215"/>
    </source>
</evidence>
<dbReference type="EMBL" id="FM165286">
    <property type="protein sequence ID" value="CAQ63319.1"/>
    <property type="molecule type" value="mRNA"/>
</dbReference>
<dbReference type="EMBL" id="AK077111">
    <property type="protein sequence ID" value="BAC36618.1"/>
    <property type="molecule type" value="mRNA"/>
</dbReference>
<dbReference type="EMBL" id="BC115588">
    <property type="protein sequence ID" value="AAI15589.1"/>
    <property type="molecule type" value="mRNA"/>
</dbReference>
<dbReference type="EMBL" id="BC115589">
    <property type="protein sequence ID" value="AAI15590.1"/>
    <property type="molecule type" value="mRNA"/>
</dbReference>
<dbReference type="CCDS" id="CCDS37668.1">
    <molecule id="Q8BVN7-1"/>
</dbReference>
<dbReference type="CCDS" id="CCDS84326.1">
    <molecule id="Q8BVN7-2"/>
</dbReference>
<dbReference type="RefSeq" id="NP_001333456.1">
    <molecule id="Q8BVN7-2"/>
    <property type="nucleotide sequence ID" value="NM_001346527.1"/>
</dbReference>
<dbReference type="RefSeq" id="NP_780542.1">
    <molecule id="Q8BVN7-1"/>
    <property type="nucleotide sequence ID" value="NM_175333.3"/>
</dbReference>
<dbReference type="SMR" id="Q8BVN7"/>
<dbReference type="FunCoup" id="Q8BVN7">
    <property type="interactions" value="384"/>
</dbReference>
<dbReference type="STRING" id="10090.ENSMUSP00000058877"/>
<dbReference type="PhosphoSitePlus" id="Q8BVN7"/>
<dbReference type="PaxDb" id="10090-ENSMUSP00000058877"/>
<dbReference type="ProteomicsDB" id="256669">
    <molecule id="Q8BVN7-1"/>
</dbReference>
<dbReference type="ProteomicsDB" id="256670">
    <molecule id="Q8BVN7-2"/>
</dbReference>
<dbReference type="Antibodypedia" id="49970">
    <property type="antibodies" value="12 antibodies from 10 providers"/>
</dbReference>
<dbReference type="DNASU" id="103775"/>
<dbReference type="Ensembl" id="ENSMUST00000058661.14">
    <molecule id="Q8BVN7-1"/>
    <property type="protein sequence ID" value="ENSMUSP00000058877.8"/>
    <property type="gene ID" value="ENSMUSG00000011486.15"/>
</dbReference>
<dbReference type="Ensembl" id="ENSMUST00000169012.2">
    <molecule id="Q8BVN7-2"/>
    <property type="protein sequence ID" value="ENSMUSP00000130857.2"/>
    <property type="gene ID" value="ENSMUSG00000011486.15"/>
</dbReference>
<dbReference type="GeneID" id="103775"/>
<dbReference type="KEGG" id="mmu:103775"/>
<dbReference type="UCSC" id="uc008dds.1">
    <molecule id="Q8BVN7-1"/>
    <property type="organism name" value="mouse"/>
</dbReference>
<dbReference type="AGR" id="MGI:2144215"/>
<dbReference type="CTD" id="284427"/>
<dbReference type="MGI" id="MGI:2144215">
    <property type="gene designation" value="Slc25a41"/>
</dbReference>
<dbReference type="VEuPathDB" id="HostDB:ENSMUSG00000011486"/>
<dbReference type="eggNOG" id="KOG0036">
    <property type="taxonomic scope" value="Eukaryota"/>
</dbReference>
<dbReference type="GeneTree" id="ENSGT00940000162419"/>
<dbReference type="HOGENOM" id="CLU_015166_10_2_1"/>
<dbReference type="InParanoid" id="Q8BVN7"/>
<dbReference type="OMA" id="ESPPFQE"/>
<dbReference type="OrthoDB" id="270584at2759"/>
<dbReference type="PhylomeDB" id="Q8BVN7"/>
<dbReference type="TreeFam" id="TF313492"/>
<dbReference type="BioGRID-ORCS" id="103775">
    <property type="hits" value="1 hit in 76 CRISPR screens"/>
</dbReference>
<dbReference type="PRO" id="PR:Q8BVN7"/>
<dbReference type="Proteomes" id="UP000000589">
    <property type="component" value="Chromosome 17"/>
</dbReference>
<dbReference type="RNAct" id="Q8BVN7">
    <property type="molecule type" value="protein"/>
</dbReference>
<dbReference type="Bgee" id="ENSMUSG00000011486">
    <property type="expression patterns" value="Expressed in spermatid and 18 other cell types or tissues"/>
</dbReference>
<dbReference type="ExpressionAtlas" id="Q8BVN7">
    <property type="expression patterns" value="baseline and differential"/>
</dbReference>
<dbReference type="GO" id="GO:0005743">
    <property type="term" value="C:mitochondrial inner membrane"/>
    <property type="evidence" value="ECO:0007669"/>
    <property type="project" value="UniProtKB-SubCell"/>
</dbReference>
<dbReference type="GO" id="GO:0005739">
    <property type="term" value="C:mitochondrion"/>
    <property type="evidence" value="ECO:0000314"/>
    <property type="project" value="UniProtKB"/>
</dbReference>
<dbReference type="GO" id="GO:0015217">
    <property type="term" value="F:ADP transmembrane transporter activity"/>
    <property type="evidence" value="ECO:0000315"/>
    <property type="project" value="UniProtKB"/>
</dbReference>
<dbReference type="GO" id="GO:0005347">
    <property type="term" value="F:ATP transmembrane transporter activity"/>
    <property type="evidence" value="ECO:0000315"/>
    <property type="project" value="UniProtKB"/>
</dbReference>
<dbReference type="GO" id="GO:0015866">
    <property type="term" value="P:ADP transport"/>
    <property type="evidence" value="ECO:0000315"/>
    <property type="project" value="UniProtKB"/>
</dbReference>
<dbReference type="GO" id="GO:0015867">
    <property type="term" value="P:ATP transport"/>
    <property type="evidence" value="ECO:0000315"/>
    <property type="project" value="UniProtKB"/>
</dbReference>
<dbReference type="GO" id="GO:0140021">
    <property type="term" value="P:mitochondrial ADP transmembrane transport"/>
    <property type="evidence" value="ECO:0000315"/>
    <property type="project" value="UniProtKB"/>
</dbReference>
<dbReference type="GO" id="GO:1990544">
    <property type="term" value="P:mitochondrial ATP transmembrane transport"/>
    <property type="evidence" value="ECO:0000315"/>
    <property type="project" value="UniProtKB"/>
</dbReference>
<dbReference type="FunFam" id="1.50.40.10:FF:000003">
    <property type="entry name" value="Putative calcium-binding mitochondrial carrier protein scamc-2"/>
    <property type="match status" value="1"/>
</dbReference>
<dbReference type="Gene3D" id="1.50.40.10">
    <property type="entry name" value="Mitochondrial carrier domain"/>
    <property type="match status" value="1"/>
</dbReference>
<dbReference type="InterPro" id="IPR002067">
    <property type="entry name" value="Mit_carrier"/>
</dbReference>
<dbReference type="InterPro" id="IPR018108">
    <property type="entry name" value="Mitochondrial_sb/sol_carrier"/>
</dbReference>
<dbReference type="InterPro" id="IPR023395">
    <property type="entry name" value="Mt_carrier_dom_sf"/>
</dbReference>
<dbReference type="PANTHER" id="PTHR24089">
    <property type="entry name" value="SOLUTE CARRIER FAMILY 25"/>
    <property type="match status" value="1"/>
</dbReference>
<dbReference type="Pfam" id="PF00153">
    <property type="entry name" value="Mito_carr"/>
    <property type="match status" value="3"/>
</dbReference>
<dbReference type="PRINTS" id="PR00926">
    <property type="entry name" value="MITOCARRIER"/>
</dbReference>
<dbReference type="SUPFAM" id="SSF103506">
    <property type="entry name" value="Mitochondrial carrier"/>
    <property type="match status" value="1"/>
</dbReference>
<dbReference type="PROSITE" id="PS50920">
    <property type="entry name" value="SOLCAR"/>
    <property type="match status" value="3"/>
</dbReference>
<feature type="chain" id="PRO_0000319991" description="Calcium-independent mitochondrial carrier protein SCaMC-3L">
    <location>
        <begin position="1"/>
        <end position="312"/>
    </location>
</feature>
<feature type="transmembrane region" description="Helical; Name=1" evidence="2">
    <location>
        <begin position="33"/>
        <end position="50"/>
    </location>
</feature>
<feature type="transmembrane region" description="Helical; Name=2" evidence="2">
    <location>
        <begin position="88"/>
        <end position="107"/>
    </location>
</feature>
<feature type="transmembrane region" description="Helical; Name=3" evidence="2">
    <location>
        <begin position="131"/>
        <end position="144"/>
    </location>
</feature>
<feature type="transmembrane region" description="Helical; Name=4" evidence="2">
    <location>
        <begin position="182"/>
        <end position="200"/>
    </location>
</feature>
<feature type="transmembrane region" description="Helical; Name=5" evidence="2">
    <location>
        <begin position="219"/>
        <end position="243"/>
    </location>
</feature>
<feature type="transmembrane region" description="Helical; Name=6" evidence="2">
    <location>
        <begin position="279"/>
        <end position="298"/>
    </location>
</feature>
<feature type="repeat" description="Solcar 1" evidence="2">
    <location>
        <begin position="27"/>
        <end position="113"/>
    </location>
</feature>
<feature type="repeat" description="Solcar 2" evidence="2">
    <location>
        <begin position="121"/>
        <end position="206"/>
    </location>
</feature>
<feature type="repeat" description="Solcar 3" evidence="2">
    <location>
        <begin position="217"/>
        <end position="304"/>
    </location>
</feature>
<feature type="splice variant" id="VSP_052684" description="In isoform 2." evidence="6">
    <location>
        <begin position="1"/>
        <end position="14"/>
    </location>
</feature>
<proteinExistence type="evidence at protein level"/>
<keyword id="KW-0025">Alternative splicing</keyword>
<keyword id="KW-0472">Membrane</keyword>
<keyword id="KW-0496">Mitochondrion</keyword>
<keyword id="KW-0999">Mitochondrion inner membrane</keyword>
<keyword id="KW-1185">Reference proteome</keyword>
<keyword id="KW-0677">Repeat</keyword>
<keyword id="KW-0812">Transmembrane</keyword>
<keyword id="KW-1133">Transmembrane helix</keyword>
<keyword id="KW-0813">Transport</keyword>
<protein>
    <recommendedName>
        <fullName evidence="8">Calcium-independent mitochondrial carrier protein SCaMC-3L</fullName>
    </recommendedName>
    <alternativeName>
        <fullName evidence="8">Mitochondrial ATP-Mg/Pi carrier protein SLC25A41</fullName>
    </alternativeName>
    <alternativeName>
        <fullName>Small calcium-binding mitochondrial carrier protein 3-like</fullName>
        <shortName evidence="7">SCaMC-3-like</shortName>
        <shortName evidence="7">SCaMC-3L</shortName>
    </alternativeName>
    <alternativeName>
        <fullName>Solute carrier family 25 member 41</fullName>
    </alternativeName>
</protein>
<name>S2541_MOUSE</name>
<sequence>MGVHLEVLDTGEQLMVPVDVLEEENKGTLWKFLLSGAMAGAVSRTGTAPLDRARVYMQVYSSKSNFRNLLSGLRSLVQEGGVRSLWRGNGINVLKIAPEYAIKFSVCEQSKNFFYGVHSSQLFQERVVAGSLAVAVSQTLINPMEVLKTRLTLRFTGQYKGLLDCARQILERDGTRALYRGYLPNMLGIIPYACTDLAVYELLQCLWQKLGRDMKDPSGLVSLSSVTLSTTCGQMASYPLTLVRTRMQAQDTVEGSNPTMQGVFKRILSQQGWPGLYRGMTPTLLKVLPAGGISYLVYEAMKKTLGVQVLSR</sequence>
<comment type="function">
    <text evidence="5">Calcium-independent ATP-Mg/Pi exchanger that catalyzes the electroneutral exchange of Mg-ATP or free ADP against an hydrogenphosphate and participates in the net transport of adenine nucleotides across the mitochondria inner membrane.</text>
</comment>
<comment type="catalytic activity">
    <reaction evidence="5">
        <text>Mg(2+)(out) + phosphate(in) + ATP(out) = Mg(2+)(in) + phosphate(out) + ATP(in)</text>
        <dbReference type="Rhea" id="RHEA:65840"/>
        <dbReference type="ChEBI" id="CHEBI:18420"/>
        <dbReference type="ChEBI" id="CHEBI:30616"/>
        <dbReference type="ChEBI" id="CHEBI:43474"/>
    </reaction>
</comment>
<comment type="catalytic activity">
    <reaction evidence="5">
        <text>ADP(out) + phosphate(in) + H(+)(out) = ADP(in) + phosphate(out) + H(+)(in)</text>
        <dbReference type="Rhea" id="RHEA:65844"/>
        <dbReference type="ChEBI" id="CHEBI:15378"/>
        <dbReference type="ChEBI" id="CHEBI:43474"/>
        <dbReference type="ChEBI" id="CHEBI:456216"/>
    </reaction>
</comment>
<comment type="biophysicochemical properties">
    <kinetics>
        <KM evidence="5">0.41 mM for ATP</KM>
        <KM evidence="5">0.9 mM for ADP</KM>
    </kinetics>
</comment>
<comment type="subcellular location">
    <subcellularLocation>
        <location evidence="5">Mitochondrion inner membrane</location>
        <topology evidence="1">Multi-pass membrane protein</topology>
    </subcellularLocation>
</comment>
<comment type="alternative products">
    <event type="alternative splicing"/>
    <isoform>
        <id>Q8BVN7-1</id>
        <name evidence="3 4">1</name>
        <sequence type="displayed"/>
    </isoform>
    <isoform>
        <id>Q8BVN7-2</id>
        <name evidence="3">2</name>
        <sequence type="described" ref="VSP_052684"/>
    </isoform>
</comment>
<comment type="tissue specificity">
    <text evidence="5">Mainly expressed in testis and at lesser levels in brain.</text>
</comment>
<comment type="similarity">
    <text evidence="8">Belongs to the mitochondrial carrier (TC 2.A.29) family.</text>
</comment>
<gene>
    <name evidence="11" type="primary">Slc25a41</name>
    <name type="synonym">SCaMC3L</name>
</gene>
<accession>Q8BVN7</accession>
<accession>B8ZHC8</accession>
<accession>Q14BV4</accession>
<organism>
    <name type="scientific">Mus musculus</name>
    <name type="common">Mouse</name>
    <dbReference type="NCBI Taxonomy" id="10090"/>
    <lineage>
        <taxon>Eukaryota</taxon>
        <taxon>Metazoa</taxon>
        <taxon>Chordata</taxon>
        <taxon>Craniata</taxon>
        <taxon>Vertebrata</taxon>
        <taxon>Euteleostomi</taxon>
        <taxon>Mammalia</taxon>
        <taxon>Eutheria</taxon>
        <taxon>Euarchontoglires</taxon>
        <taxon>Glires</taxon>
        <taxon>Rodentia</taxon>
        <taxon>Myomorpha</taxon>
        <taxon>Muroidea</taxon>
        <taxon>Muridae</taxon>
        <taxon>Murinae</taxon>
        <taxon>Mus</taxon>
        <taxon>Mus</taxon>
    </lineage>
</organism>
<reference key="1">
    <citation type="journal article" date="2009" name="Biochem. J.">
        <title>Characterization of SCaMC-3-like/slc25a41, a novel calcium-independent mitochondrial ATP-Mg/Pi carrier.</title>
        <authorList>
            <person name="Traba J."/>
            <person name="Satrustegui J."/>
            <person name="del Arco A."/>
        </authorList>
    </citation>
    <scope>NUCLEOTIDE SEQUENCE [MRNA]</scope>
    <scope>BIOPHYSICOCHEMICAL PROPERTIES</scope>
    <scope>SUBCELLULAR LOCATION</scope>
    <scope>TISSUE SPECIFICITY</scope>
    <scope>FUNCTION</scope>
    <scope>TRANSPORTER ACTIVITY</scope>
    <source>
        <tissue>Testis</tissue>
    </source>
</reference>
<reference evidence="8 10" key="2">
    <citation type="journal article" date="2005" name="Science">
        <title>The transcriptional landscape of the mammalian genome.</title>
        <authorList>
            <person name="Carninci P."/>
            <person name="Kasukawa T."/>
            <person name="Katayama S."/>
            <person name="Gough J."/>
            <person name="Frith M.C."/>
            <person name="Maeda N."/>
            <person name="Oyama R."/>
            <person name="Ravasi T."/>
            <person name="Lenhard B."/>
            <person name="Wells C."/>
            <person name="Kodzius R."/>
            <person name="Shimokawa K."/>
            <person name="Bajic V.B."/>
            <person name="Brenner S.E."/>
            <person name="Batalov S."/>
            <person name="Forrest A.R."/>
            <person name="Zavolan M."/>
            <person name="Davis M.J."/>
            <person name="Wilming L.G."/>
            <person name="Aidinis V."/>
            <person name="Allen J.E."/>
            <person name="Ambesi-Impiombato A."/>
            <person name="Apweiler R."/>
            <person name="Aturaliya R.N."/>
            <person name="Bailey T.L."/>
            <person name="Bansal M."/>
            <person name="Baxter L."/>
            <person name="Beisel K.W."/>
            <person name="Bersano T."/>
            <person name="Bono H."/>
            <person name="Chalk A.M."/>
            <person name="Chiu K.P."/>
            <person name="Choudhary V."/>
            <person name="Christoffels A."/>
            <person name="Clutterbuck D.R."/>
            <person name="Crowe M.L."/>
            <person name="Dalla E."/>
            <person name="Dalrymple B.P."/>
            <person name="de Bono B."/>
            <person name="Della Gatta G."/>
            <person name="di Bernardo D."/>
            <person name="Down T."/>
            <person name="Engstrom P."/>
            <person name="Fagiolini M."/>
            <person name="Faulkner G."/>
            <person name="Fletcher C.F."/>
            <person name="Fukushima T."/>
            <person name="Furuno M."/>
            <person name="Futaki S."/>
            <person name="Gariboldi M."/>
            <person name="Georgii-Hemming P."/>
            <person name="Gingeras T.R."/>
            <person name="Gojobori T."/>
            <person name="Green R.E."/>
            <person name="Gustincich S."/>
            <person name="Harbers M."/>
            <person name="Hayashi Y."/>
            <person name="Hensch T.K."/>
            <person name="Hirokawa N."/>
            <person name="Hill D."/>
            <person name="Huminiecki L."/>
            <person name="Iacono M."/>
            <person name="Ikeo K."/>
            <person name="Iwama A."/>
            <person name="Ishikawa T."/>
            <person name="Jakt M."/>
            <person name="Kanapin A."/>
            <person name="Katoh M."/>
            <person name="Kawasawa Y."/>
            <person name="Kelso J."/>
            <person name="Kitamura H."/>
            <person name="Kitano H."/>
            <person name="Kollias G."/>
            <person name="Krishnan S.P."/>
            <person name="Kruger A."/>
            <person name="Kummerfeld S.K."/>
            <person name="Kurochkin I.V."/>
            <person name="Lareau L.F."/>
            <person name="Lazarevic D."/>
            <person name="Lipovich L."/>
            <person name="Liu J."/>
            <person name="Liuni S."/>
            <person name="McWilliam S."/>
            <person name="Madan Babu M."/>
            <person name="Madera M."/>
            <person name="Marchionni L."/>
            <person name="Matsuda H."/>
            <person name="Matsuzawa S."/>
            <person name="Miki H."/>
            <person name="Mignone F."/>
            <person name="Miyake S."/>
            <person name="Morris K."/>
            <person name="Mottagui-Tabar S."/>
            <person name="Mulder N."/>
            <person name="Nakano N."/>
            <person name="Nakauchi H."/>
            <person name="Ng P."/>
            <person name="Nilsson R."/>
            <person name="Nishiguchi S."/>
            <person name="Nishikawa S."/>
            <person name="Nori F."/>
            <person name="Ohara O."/>
            <person name="Okazaki Y."/>
            <person name="Orlando V."/>
            <person name="Pang K.C."/>
            <person name="Pavan W.J."/>
            <person name="Pavesi G."/>
            <person name="Pesole G."/>
            <person name="Petrovsky N."/>
            <person name="Piazza S."/>
            <person name="Reed J."/>
            <person name="Reid J.F."/>
            <person name="Ring B.Z."/>
            <person name="Ringwald M."/>
            <person name="Rost B."/>
            <person name="Ruan Y."/>
            <person name="Salzberg S.L."/>
            <person name="Sandelin A."/>
            <person name="Schneider C."/>
            <person name="Schoenbach C."/>
            <person name="Sekiguchi K."/>
            <person name="Semple C.A."/>
            <person name="Seno S."/>
            <person name="Sessa L."/>
            <person name="Sheng Y."/>
            <person name="Shibata Y."/>
            <person name="Shimada H."/>
            <person name="Shimada K."/>
            <person name="Silva D."/>
            <person name="Sinclair B."/>
            <person name="Sperling S."/>
            <person name="Stupka E."/>
            <person name="Sugiura K."/>
            <person name="Sultana R."/>
            <person name="Takenaka Y."/>
            <person name="Taki K."/>
            <person name="Tammoja K."/>
            <person name="Tan S.L."/>
            <person name="Tang S."/>
            <person name="Taylor M.S."/>
            <person name="Tegner J."/>
            <person name="Teichmann S.A."/>
            <person name="Ueda H.R."/>
            <person name="van Nimwegen E."/>
            <person name="Verardo R."/>
            <person name="Wei C.L."/>
            <person name="Yagi K."/>
            <person name="Yamanishi H."/>
            <person name="Zabarovsky E."/>
            <person name="Zhu S."/>
            <person name="Zimmer A."/>
            <person name="Hide W."/>
            <person name="Bult C."/>
            <person name="Grimmond S.M."/>
            <person name="Teasdale R.D."/>
            <person name="Liu E.T."/>
            <person name="Brusic V."/>
            <person name="Quackenbush J."/>
            <person name="Wahlestedt C."/>
            <person name="Mattick J.S."/>
            <person name="Hume D.A."/>
            <person name="Kai C."/>
            <person name="Sasaki D."/>
            <person name="Tomaru Y."/>
            <person name="Fukuda S."/>
            <person name="Kanamori-Katayama M."/>
            <person name="Suzuki M."/>
            <person name="Aoki J."/>
            <person name="Arakawa T."/>
            <person name="Iida J."/>
            <person name="Imamura K."/>
            <person name="Itoh M."/>
            <person name="Kato T."/>
            <person name="Kawaji H."/>
            <person name="Kawagashira N."/>
            <person name="Kawashima T."/>
            <person name="Kojima M."/>
            <person name="Kondo S."/>
            <person name="Konno H."/>
            <person name="Nakano K."/>
            <person name="Ninomiya N."/>
            <person name="Nishio T."/>
            <person name="Okada M."/>
            <person name="Plessy C."/>
            <person name="Shibata K."/>
            <person name="Shiraki T."/>
            <person name="Suzuki S."/>
            <person name="Tagami M."/>
            <person name="Waki K."/>
            <person name="Watahiki A."/>
            <person name="Okamura-Oho Y."/>
            <person name="Suzuki H."/>
            <person name="Kawai J."/>
            <person name="Hayashizaki Y."/>
        </authorList>
    </citation>
    <scope>NUCLEOTIDE SEQUENCE [LARGE SCALE MRNA] (ISOFORM 1)</scope>
    <source>
        <strain evidence="10">C57BL/6J</strain>
        <tissue evidence="10">Testis</tissue>
    </source>
</reference>
<reference evidence="8 9" key="3">
    <citation type="journal article" date="2004" name="Genome Res.">
        <title>The status, quality, and expansion of the NIH full-length cDNA project: the Mammalian Gene Collection (MGC).</title>
        <authorList>
            <consortium name="The MGC Project Team"/>
        </authorList>
    </citation>
    <scope>NUCLEOTIDE SEQUENCE [LARGE SCALE MRNA] (ISOFORMS 1 AND 2)</scope>
</reference>